<accession>Q9V1T5</accession>
<accession>G8ZHX6</accession>
<protein>
    <recommendedName>
        <fullName evidence="1">Large ribosomal subunit protein uL3</fullName>
    </recommendedName>
    <alternativeName>
        <fullName evidence="3">50S ribosomal protein L3</fullName>
    </alternativeName>
</protein>
<sequence length="361" mass="40853">MGKVHRPRRGSLAFSPRKRAKSIVPRIRSWPKETEVRMLGFAGYKAGMTHILMIDDEPGLTNGKEIFMPVTIIETPPLRVFGIRAYRQGYLGLETATEVIVPDFELDNYVSKKAKGRKFTFYQLLKRRIATLPKNYTKDDFEQKLGNLEDMIKEGEIVEVRALVATQPWVIKLKKKPEVMEYAIGGTSVEEKFNYIKEKLGKELRVGEVLKEGELLDVIAVTKGKGTQGPVKRWGIKLRAHKDSKGRRKVGSIGPWHPARVMWTVPMAGQMGFHHRTELNKRLIAIGENGKLVIDGNEIEITPKGGFPHYGIVRSDFMMIAGSVPGAIKRIIRVRPAIRPPKKKPPVQRPQITYVSVESKQ</sequence>
<proteinExistence type="inferred from homology"/>
<gene>
    <name evidence="1" type="primary">rpl3</name>
    <name type="ordered locus">PYRAB03420</name>
    <name type="ORF">PAB2120</name>
</gene>
<organism>
    <name type="scientific">Pyrococcus abyssi (strain GE5 / Orsay)</name>
    <dbReference type="NCBI Taxonomy" id="272844"/>
    <lineage>
        <taxon>Archaea</taxon>
        <taxon>Methanobacteriati</taxon>
        <taxon>Methanobacteriota</taxon>
        <taxon>Thermococci</taxon>
        <taxon>Thermococcales</taxon>
        <taxon>Thermococcaceae</taxon>
        <taxon>Pyrococcus</taxon>
    </lineage>
</organism>
<name>RL3_PYRAB</name>
<reference key="1">
    <citation type="journal article" date="2003" name="Mol. Microbiol.">
        <title>An integrated analysis of the genome of the hyperthermophilic archaeon Pyrococcus abyssi.</title>
        <authorList>
            <person name="Cohen G.N."/>
            <person name="Barbe V."/>
            <person name="Flament D."/>
            <person name="Galperin M."/>
            <person name="Heilig R."/>
            <person name="Lecompte O."/>
            <person name="Poch O."/>
            <person name="Prieur D."/>
            <person name="Querellou J."/>
            <person name="Ripp R."/>
            <person name="Thierry J.-C."/>
            <person name="Van der Oost J."/>
            <person name="Weissenbach J."/>
            <person name="Zivanovic Y."/>
            <person name="Forterre P."/>
        </authorList>
    </citation>
    <scope>NUCLEOTIDE SEQUENCE [LARGE SCALE GENOMIC DNA]</scope>
    <source>
        <strain>GE5 / Orsay</strain>
    </source>
</reference>
<reference key="2">
    <citation type="journal article" date="2012" name="Curr. Microbiol.">
        <title>Re-annotation of two hyperthermophilic archaea Pyrococcus abyssi GE5 and Pyrococcus furiosus DSM 3638.</title>
        <authorList>
            <person name="Gao J."/>
            <person name="Wang J."/>
        </authorList>
    </citation>
    <scope>GENOME REANNOTATION</scope>
    <source>
        <strain>GE5 / Orsay</strain>
    </source>
</reference>
<comment type="function">
    <text evidence="1">One of the primary rRNA binding proteins, it binds directly near the 3'-end of the 23S rRNA, where it nucleates assembly of the 50S subunit.</text>
</comment>
<comment type="subunit">
    <text evidence="1">Part of the 50S ribosomal subunit. Forms a cluster with proteins L14 and L24e.</text>
</comment>
<comment type="similarity">
    <text evidence="1">Belongs to the universal ribosomal protein uL3 family.</text>
</comment>
<keyword id="KW-0687">Ribonucleoprotein</keyword>
<keyword id="KW-0689">Ribosomal protein</keyword>
<keyword id="KW-0694">RNA-binding</keyword>
<keyword id="KW-0699">rRNA-binding</keyword>
<feature type="chain" id="PRO_0000077216" description="Large ribosomal subunit protein uL3">
    <location>
        <begin position="1"/>
        <end position="361"/>
    </location>
</feature>
<feature type="region of interest" description="Disordered" evidence="2">
    <location>
        <begin position="339"/>
        <end position="361"/>
    </location>
</feature>
<feature type="compositionally biased region" description="Polar residues" evidence="2">
    <location>
        <begin position="350"/>
        <end position="361"/>
    </location>
</feature>
<dbReference type="EMBL" id="AJ248284">
    <property type="protein sequence ID" value="CAB49264.1"/>
    <property type="molecule type" value="Genomic_DNA"/>
</dbReference>
<dbReference type="EMBL" id="HE613800">
    <property type="protein sequence ID" value="CCE69719.1"/>
    <property type="molecule type" value="Genomic_DNA"/>
</dbReference>
<dbReference type="PIR" id="A75148">
    <property type="entry name" value="A75148"/>
</dbReference>
<dbReference type="RefSeq" id="WP_010867464.1">
    <property type="nucleotide sequence ID" value="NC_000868.1"/>
</dbReference>
<dbReference type="SMR" id="Q9V1T5"/>
<dbReference type="STRING" id="272844.PAB2120"/>
<dbReference type="KEGG" id="pab:PAB2120"/>
<dbReference type="PATRIC" id="fig|272844.11.peg.363"/>
<dbReference type="eggNOG" id="arCOG04070">
    <property type="taxonomic scope" value="Archaea"/>
</dbReference>
<dbReference type="HOGENOM" id="CLU_033361_2_0_2"/>
<dbReference type="OrthoDB" id="6121at2157"/>
<dbReference type="PhylomeDB" id="Q9V1T5"/>
<dbReference type="Proteomes" id="UP000000810">
    <property type="component" value="Chromosome"/>
</dbReference>
<dbReference type="Proteomes" id="UP000009139">
    <property type="component" value="Chromosome"/>
</dbReference>
<dbReference type="GO" id="GO:0022625">
    <property type="term" value="C:cytosolic large ribosomal subunit"/>
    <property type="evidence" value="ECO:0007669"/>
    <property type="project" value="TreeGrafter"/>
</dbReference>
<dbReference type="GO" id="GO:0019843">
    <property type="term" value="F:rRNA binding"/>
    <property type="evidence" value="ECO:0007669"/>
    <property type="project" value="UniProtKB-UniRule"/>
</dbReference>
<dbReference type="GO" id="GO:0003735">
    <property type="term" value="F:structural constituent of ribosome"/>
    <property type="evidence" value="ECO:0007669"/>
    <property type="project" value="InterPro"/>
</dbReference>
<dbReference type="GO" id="GO:0006412">
    <property type="term" value="P:translation"/>
    <property type="evidence" value="ECO:0007669"/>
    <property type="project" value="UniProtKB-UniRule"/>
</dbReference>
<dbReference type="Gene3D" id="3.30.1430.10">
    <property type="match status" value="1"/>
</dbReference>
<dbReference type="Gene3D" id="4.10.960.10">
    <property type="entry name" value="Ribosomal protein L3, domain 3"/>
    <property type="match status" value="1"/>
</dbReference>
<dbReference type="Gene3D" id="2.40.30.10">
    <property type="entry name" value="Translation factors"/>
    <property type="match status" value="1"/>
</dbReference>
<dbReference type="HAMAP" id="MF_01325_A">
    <property type="entry name" value="Ribosomal_uL3_A"/>
    <property type="match status" value="1"/>
</dbReference>
<dbReference type="InterPro" id="IPR045077">
    <property type="entry name" value="L3_arc_euk"/>
</dbReference>
<dbReference type="InterPro" id="IPR044892">
    <property type="entry name" value="Ribosomal_L3_dom_3_arc_sf"/>
</dbReference>
<dbReference type="InterPro" id="IPR000597">
    <property type="entry name" value="Ribosomal_uL3"/>
</dbReference>
<dbReference type="InterPro" id="IPR019928">
    <property type="entry name" value="Ribosomal_uL3_arc"/>
</dbReference>
<dbReference type="InterPro" id="IPR019926">
    <property type="entry name" value="Ribosomal_uL3_CS"/>
</dbReference>
<dbReference type="InterPro" id="IPR009000">
    <property type="entry name" value="Transl_B-barrel_sf"/>
</dbReference>
<dbReference type="NCBIfam" id="TIGR03626">
    <property type="entry name" value="L3_arch"/>
    <property type="match status" value="1"/>
</dbReference>
<dbReference type="NCBIfam" id="NF003261">
    <property type="entry name" value="PRK04231.1"/>
    <property type="match status" value="1"/>
</dbReference>
<dbReference type="PANTHER" id="PTHR11363">
    <property type="entry name" value="60S RIBOSOMAL PROTEIN L3-RELATED"/>
    <property type="match status" value="1"/>
</dbReference>
<dbReference type="PANTHER" id="PTHR11363:SF5">
    <property type="entry name" value="LARGE RIBOSOMAL SUBUNIT PROTEIN UL3"/>
    <property type="match status" value="1"/>
</dbReference>
<dbReference type="Pfam" id="PF00297">
    <property type="entry name" value="Ribosomal_L3"/>
    <property type="match status" value="1"/>
</dbReference>
<dbReference type="SUPFAM" id="SSF50447">
    <property type="entry name" value="Translation proteins"/>
    <property type="match status" value="1"/>
</dbReference>
<dbReference type="PROSITE" id="PS00474">
    <property type="entry name" value="RIBOSOMAL_L3"/>
    <property type="match status" value="1"/>
</dbReference>
<evidence type="ECO:0000255" key="1">
    <source>
        <dbReference type="HAMAP-Rule" id="MF_01325"/>
    </source>
</evidence>
<evidence type="ECO:0000256" key="2">
    <source>
        <dbReference type="SAM" id="MobiDB-lite"/>
    </source>
</evidence>
<evidence type="ECO:0000305" key="3"/>